<sequence length="471" mass="51742">MPAKGVIQEIIGVVIRAKFPEDQVPEIYNAIEIPLEQGGRLVCEVQQQLGNGVVKAVAMGSTDGLRRGLEVIDTGRPIAVPVGPATLGRVFNVLGDPIDGGPPFGPEVERRPIHRDPPSFEEQSTQAQIFETGIKVIDLIAPFTRGGKTAIFGGAGVGKTVVIQELIANIAKEQSGFSVFAGVGERSREGNDLIHEMREARIDENTTVFDKTIMVFGQMNEPPGARLRVGLTALTMAEYFRDQGRDILLFIDNIFRFVQAGSEVSSLLGRMPSQVGYQPTLGTEMGELQERITSTKRGSITSMQAVYVPADDYTDPAPATVFSHLDATISLERSIAERAIFPAVDPLASTSRILDPNIVGEEHYRVAQEVKRVLQRYKDLKDIIAILGMEELSDEDKLTVQRARKIELFFSQPFTVAQQFTGRPGKYVPVKKTVESFARLLNGEGDHIPESFFYMQGDFDDVLAAYEASQK</sequence>
<reference key="1">
    <citation type="submission" date="2008-12" db="EMBL/GenBank/DDBJ databases">
        <title>Complete sequence of Chloroflexus aggregans DSM 9485.</title>
        <authorList>
            <consortium name="US DOE Joint Genome Institute"/>
            <person name="Lucas S."/>
            <person name="Copeland A."/>
            <person name="Lapidus A."/>
            <person name="Glavina del Rio T."/>
            <person name="Dalin E."/>
            <person name="Tice H."/>
            <person name="Pitluck S."/>
            <person name="Foster B."/>
            <person name="Larimer F."/>
            <person name="Land M."/>
            <person name="Hauser L."/>
            <person name="Kyrpides N."/>
            <person name="Mikhailova N."/>
            <person name="Bryant D.A."/>
            <person name="Richardson P."/>
        </authorList>
    </citation>
    <scope>NUCLEOTIDE SEQUENCE [LARGE SCALE GENOMIC DNA]</scope>
    <source>
        <strain>MD-66 / DSM 9485</strain>
    </source>
</reference>
<name>ATPB_CHLAD</name>
<dbReference type="EC" id="7.1.2.2" evidence="1"/>
<dbReference type="EMBL" id="CP001337">
    <property type="protein sequence ID" value="ACL23903.1"/>
    <property type="molecule type" value="Genomic_DNA"/>
</dbReference>
<dbReference type="RefSeq" id="WP_012616269.1">
    <property type="nucleotide sequence ID" value="NC_011831.1"/>
</dbReference>
<dbReference type="SMR" id="B8G6G6"/>
<dbReference type="STRING" id="326427.Cagg_0985"/>
<dbReference type="KEGG" id="cag:Cagg_0985"/>
<dbReference type="eggNOG" id="COG0055">
    <property type="taxonomic scope" value="Bacteria"/>
</dbReference>
<dbReference type="HOGENOM" id="CLU_022398_0_2_0"/>
<dbReference type="OrthoDB" id="9801639at2"/>
<dbReference type="Proteomes" id="UP000002508">
    <property type="component" value="Chromosome"/>
</dbReference>
<dbReference type="GO" id="GO:0005886">
    <property type="term" value="C:plasma membrane"/>
    <property type="evidence" value="ECO:0007669"/>
    <property type="project" value="UniProtKB-SubCell"/>
</dbReference>
<dbReference type="GO" id="GO:0045259">
    <property type="term" value="C:proton-transporting ATP synthase complex"/>
    <property type="evidence" value="ECO:0007669"/>
    <property type="project" value="UniProtKB-KW"/>
</dbReference>
<dbReference type="GO" id="GO:0005524">
    <property type="term" value="F:ATP binding"/>
    <property type="evidence" value="ECO:0007669"/>
    <property type="project" value="UniProtKB-UniRule"/>
</dbReference>
<dbReference type="GO" id="GO:0016887">
    <property type="term" value="F:ATP hydrolysis activity"/>
    <property type="evidence" value="ECO:0007669"/>
    <property type="project" value="InterPro"/>
</dbReference>
<dbReference type="GO" id="GO:0046933">
    <property type="term" value="F:proton-transporting ATP synthase activity, rotational mechanism"/>
    <property type="evidence" value="ECO:0007669"/>
    <property type="project" value="UniProtKB-UniRule"/>
</dbReference>
<dbReference type="CDD" id="cd18110">
    <property type="entry name" value="ATP-synt_F1_beta_C"/>
    <property type="match status" value="1"/>
</dbReference>
<dbReference type="CDD" id="cd18115">
    <property type="entry name" value="ATP-synt_F1_beta_N"/>
    <property type="match status" value="1"/>
</dbReference>
<dbReference type="CDD" id="cd01133">
    <property type="entry name" value="F1-ATPase_beta_CD"/>
    <property type="match status" value="1"/>
</dbReference>
<dbReference type="FunFam" id="1.10.1140.10:FF:000001">
    <property type="entry name" value="ATP synthase subunit beta"/>
    <property type="match status" value="1"/>
</dbReference>
<dbReference type="FunFam" id="3.40.50.300:FF:000004">
    <property type="entry name" value="ATP synthase subunit beta"/>
    <property type="match status" value="1"/>
</dbReference>
<dbReference type="Gene3D" id="2.40.10.170">
    <property type="match status" value="1"/>
</dbReference>
<dbReference type="Gene3D" id="1.10.1140.10">
    <property type="entry name" value="Bovine Mitochondrial F1-atpase, Atp Synthase Beta Chain, Chain D, domain 3"/>
    <property type="match status" value="1"/>
</dbReference>
<dbReference type="Gene3D" id="3.40.50.300">
    <property type="entry name" value="P-loop containing nucleotide triphosphate hydrolases"/>
    <property type="match status" value="1"/>
</dbReference>
<dbReference type="HAMAP" id="MF_01347">
    <property type="entry name" value="ATP_synth_beta_bact"/>
    <property type="match status" value="1"/>
</dbReference>
<dbReference type="InterPro" id="IPR003593">
    <property type="entry name" value="AAA+_ATPase"/>
</dbReference>
<dbReference type="InterPro" id="IPR055190">
    <property type="entry name" value="ATP-synt_VA_C"/>
</dbReference>
<dbReference type="InterPro" id="IPR005722">
    <property type="entry name" value="ATP_synth_F1_bsu"/>
</dbReference>
<dbReference type="InterPro" id="IPR020003">
    <property type="entry name" value="ATPase_a/bsu_AS"/>
</dbReference>
<dbReference type="InterPro" id="IPR050053">
    <property type="entry name" value="ATPase_alpha/beta_chains"/>
</dbReference>
<dbReference type="InterPro" id="IPR004100">
    <property type="entry name" value="ATPase_F1/V1/A1_a/bsu_N"/>
</dbReference>
<dbReference type="InterPro" id="IPR036121">
    <property type="entry name" value="ATPase_F1/V1/A1_a/bsu_N_sf"/>
</dbReference>
<dbReference type="InterPro" id="IPR000194">
    <property type="entry name" value="ATPase_F1/V1/A1_a/bsu_nucl-bd"/>
</dbReference>
<dbReference type="InterPro" id="IPR024034">
    <property type="entry name" value="ATPase_F1/V1_b/a_C"/>
</dbReference>
<dbReference type="InterPro" id="IPR027417">
    <property type="entry name" value="P-loop_NTPase"/>
</dbReference>
<dbReference type="NCBIfam" id="TIGR01039">
    <property type="entry name" value="atpD"/>
    <property type="match status" value="1"/>
</dbReference>
<dbReference type="PANTHER" id="PTHR15184">
    <property type="entry name" value="ATP SYNTHASE"/>
    <property type="match status" value="1"/>
</dbReference>
<dbReference type="PANTHER" id="PTHR15184:SF71">
    <property type="entry name" value="ATP SYNTHASE SUBUNIT BETA, MITOCHONDRIAL"/>
    <property type="match status" value="1"/>
</dbReference>
<dbReference type="Pfam" id="PF00006">
    <property type="entry name" value="ATP-synt_ab"/>
    <property type="match status" value="1"/>
</dbReference>
<dbReference type="Pfam" id="PF02874">
    <property type="entry name" value="ATP-synt_ab_N"/>
    <property type="match status" value="1"/>
</dbReference>
<dbReference type="Pfam" id="PF22919">
    <property type="entry name" value="ATP-synt_VA_C"/>
    <property type="match status" value="1"/>
</dbReference>
<dbReference type="SMART" id="SM00382">
    <property type="entry name" value="AAA"/>
    <property type="match status" value="1"/>
</dbReference>
<dbReference type="SUPFAM" id="SSF47917">
    <property type="entry name" value="C-terminal domain of alpha and beta subunits of F1 ATP synthase"/>
    <property type="match status" value="1"/>
</dbReference>
<dbReference type="SUPFAM" id="SSF50615">
    <property type="entry name" value="N-terminal domain of alpha and beta subunits of F1 ATP synthase"/>
    <property type="match status" value="1"/>
</dbReference>
<dbReference type="SUPFAM" id="SSF52540">
    <property type="entry name" value="P-loop containing nucleoside triphosphate hydrolases"/>
    <property type="match status" value="1"/>
</dbReference>
<dbReference type="PROSITE" id="PS00152">
    <property type="entry name" value="ATPASE_ALPHA_BETA"/>
    <property type="match status" value="1"/>
</dbReference>
<feature type="chain" id="PRO_1000166578" description="ATP synthase subunit beta">
    <location>
        <begin position="1"/>
        <end position="471"/>
    </location>
</feature>
<feature type="binding site" evidence="1">
    <location>
        <begin position="153"/>
        <end position="160"/>
    </location>
    <ligand>
        <name>ATP</name>
        <dbReference type="ChEBI" id="CHEBI:30616"/>
    </ligand>
</feature>
<evidence type="ECO:0000255" key="1">
    <source>
        <dbReference type="HAMAP-Rule" id="MF_01347"/>
    </source>
</evidence>
<accession>B8G6G6</accession>
<organism>
    <name type="scientific">Chloroflexus aggregans (strain MD-66 / DSM 9485)</name>
    <dbReference type="NCBI Taxonomy" id="326427"/>
    <lineage>
        <taxon>Bacteria</taxon>
        <taxon>Bacillati</taxon>
        <taxon>Chloroflexota</taxon>
        <taxon>Chloroflexia</taxon>
        <taxon>Chloroflexales</taxon>
        <taxon>Chloroflexineae</taxon>
        <taxon>Chloroflexaceae</taxon>
        <taxon>Chloroflexus</taxon>
    </lineage>
</organism>
<proteinExistence type="inferred from homology"/>
<gene>
    <name evidence="1" type="primary">atpD</name>
    <name type="ordered locus">Cagg_0985</name>
</gene>
<protein>
    <recommendedName>
        <fullName evidence="1">ATP synthase subunit beta</fullName>
        <ecNumber evidence="1">7.1.2.2</ecNumber>
    </recommendedName>
    <alternativeName>
        <fullName evidence="1">ATP synthase F1 sector subunit beta</fullName>
    </alternativeName>
    <alternativeName>
        <fullName evidence="1">F-ATPase subunit beta</fullName>
    </alternativeName>
</protein>
<keyword id="KW-0066">ATP synthesis</keyword>
<keyword id="KW-0067">ATP-binding</keyword>
<keyword id="KW-1003">Cell membrane</keyword>
<keyword id="KW-0139">CF(1)</keyword>
<keyword id="KW-0375">Hydrogen ion transport</keyword>
<keyword id="KW-0406">Ion transport</keyword>
<keyword id="KW-0472">Membrane</keyword>
<keyword id="KW-0547">Nucleotide-binding</keyword>
<keyword id="KW-1278">Translocase</keyword>
<keyword id="KW-0813">Transport</keyword>
<comment type="function">
    <text evidence="1">Produces ATP from ADP in the presence of a proton gradient across the membrane. The catalytic sites are hosted primarily by the beta subunits.</text>
</comment>
<comment type="catalytic activity">
    <reaction evidence="1">
        <text>ATP + H2O + 4 H(+)(in) = ADP + phosphate + 5 H(+)(out)</text>
        <dbReference type="Rhea" id="RHEA:57720"/>
        <dbReference type="ChEBI" id="CHEBI:15377"/>
        <dbReference type="ChEBI" id="CHEBI:15378"/>
        <dbReference type="ChEBI" id="CHEBI:30616"/>
        <dbReference type="ChEBI" id="CHEBI:43474"/>
        <dbReference type="ChEBI" id="CHEBI:456216"/>
        <dbReference type="EC" id="7.1.2.2"/>
    </reaction>
</comment>
<comment type="subunit">
    <text evidence="1">F-type ATPases have 2 components, CF(1) - the catalytic core - and CF(0) - the membrane proton channel. CF(1) has five subunits: alpha(3), beta(3), gamma(1), delta(1), epsilon(1). CF(0) has four main subunits: a(1), b(1), b'(1) and c(9-12).</text>
</comment>
<comment type="subcellular location">
    <subcellularLocation>
        <location evidence="1">Cell membrane</location>
        <topology evidence="1">Peripheral membrane protein</topology>
    </subcellularLocation>
</comment>
<comment type="similarity">
    <text evidence="1">Belongs to the ATPase alpha/beta chains family.</text>
</comment>